<protein>
    <recommendedName>
        <fullName evidence="1">Large ribosomal subunit protein bL28</fullName>
    </recommendedName>
    <alternativeName>
        <fullName evidence="2">50S ribosomal protein L28</fullName>
    </alternativeName>
</protein>
<dbReference type="EMBL" id="CP000359">
    <property type="protein sequence ID" value="ABF44837.1"/>
    <property type="molecule type" value="Genomic_DNA"/>
</dbReference>
<dbReference type="RefSeq" id="WP_011529679.1">
    <property type="nucleotide sequence ID" value="NC_008025.1"/>
</dbReference>
<dbReference type="SMR" id="Q1J0Z7"/>
<dbReference type="STRING" id="319795.Dgeo_0535"/>
<dbReference type="KEGG" id="dge:Dgeo_0535"/>
<dbReference type="eggNOG" id="COG0227">
    <property type="taxonomic scope" value="Bacteria"/>
</dbReference>
<dbReference type="HOGENOM" id="CLU_064548_6_0_0"/>
<dbReference type="Proteomes" id="UP000002431">
    <property type="component" value="Chromosome"/>
</dbReference>
<dbReference type="GO" id="GO:1990904">
    <property type="term" value="C:ribonucleoprotein complex"/>
    <property type="evidence" value="ECO:0007669"/>
    <property type="project" value="UniProtKB-KW"/>
</dbReference>
<dbReference type="GO" id="GO:0005840">
    <property type="term" value="C:ribosome"/>
    <property type="evidence" value="ECO:0007669"/>
    <property type="project" value="UniProtKB-KW"/>
</dbReference>
<dbReference type="GO" id="GO:0003735">
    <property type="term" value="F:structural constituent of ribosome"/>
    <property type="evidence" value="ECO:0007669"/>
    <property type="project" value="InterPro"/>
</dbReference>
<dbReference type="GO" id="GO:0006412">
    <property type="term" value="P:translation"/>
    <property type="evidence" value="ECO:0007669"/>
    <property type="project" value="UniProtKB-UniRule"/>
</dbReference>
<dbReference type="Gene3D" id="2.30.170.40">
    <property type="entry name" value="Ribosomal protein L28/L24"/>
    <property type="match status" value="1"/>
</dbReference>
<dbReference type="HAMAP" id="MF_00373">
    <property type="entry name" value="Ribosomal_bL28"/>
    <property type="match status" value="1"/>
</dbReference>
<dbReference type="InterPro" id="IPR050096">
    <property type="entry name" value="Bacterial_rp_bL28"/>
</dbReference>
<dbReference type="InterPro" id="IPR026569">
    <property type="entry name" value="Ribosomal_bL28"/>
</dbReference>
<dbReference type="InterPro" id="IPR034704">
    <property type="entry name" value="Ribosomal_bL28/bL31-like_sf"/>
</dbReference>
<dbReference type="InterPro" id="IPR001383">
    <property type="entry name" value="Ribosomal_bL28_bact-type"/>
</dbReference>
<dbReference type="InterPro" id="IPR037147">
    <property type="entry name" value="Ribosomal_bL28_sf"/>
</dbReference>
<dbReference type="NCBIfam" id="TIGR00009">
    <property type="entry name" value="L28"/>
    <property type="match status" value="1"/>
</dbReference>
<dbReference type="PANTHER" id="PTHR39080">
    <property type="entry name" value="50S RIBOSOMAL PROTEIN L28"/>
    <property type="match status" value="1"/>
</dbReference>
<dbReference type="PANTHER" id="PTHR39080:SF1">
    <property type="entry name" value="LARGE RIBOSOMAL SUBUNIT PROTEIN BL28A"/>
    <property type="match status" value="1"/>
</dbReference>
<dbReference type="Pfam" id="PF00830">
    <property type="entry name" value="Ribosomal_L28"/>
    <property type="match status" value="1"/>
</dbReference>
<dbReference type="SUPFAM" id="SSF143800">
    <property type="entry name" value="L28p-like"/>
    <property type="match status" value="1"/>
</dbReference>
<comment type="similarity">
    <text evidence="1">Belongs to the bacterial ribosomal protein bL28 family.</text>
</comment>
<gene>
    <name evidence="1" type="primary">rpmB</name>
    <name type="ordered locus">Dgeo_0535</name>
</gene>
<name>RL28_DEIGD</name>
<organism>
    <name type="scientific">Deinococcus geothermalis (strain DSM 11300 / CIP 105573 / AG-3a)</name>
    <dbReference type="NCBI Taxonomy" id="319795"/>
    <lineage>
        <taxon>Bacteria</taxon>
        <taxon>Thermotogati</taxon>
        <taxon>Deinococcota</taxon>
        <taxon>Deinococci</taxon>
        <taxon>Deinococcales</taxon>
        <taxon>Deinococcaceae</taxon>
        <taxon>Deinococcus</taxon>
    </lineage>
</organism>
<accession>Q1J0Z7</accession>
<feature type="chain" id="PRO_1000205592" description="Large ribosomal subunit protein bL28">
    <location>
        <begin position="1"/>
        <end position="84"/>
    </location>
</feature>
<sequence>MSHQCYLTGKKTMVVNAVIRRGKARREGGVGRKTTGITKRVQKANLHKKLIRENGVLKRVWLSAAALRTLNKGPYQGVELACRC</sequence>
<reference key="1">
    <citation type="submission" date="2006-04" db="EMBL/GenBank/DDBJ databases">
        <title>Complete sequence of chromosome of Deinococcus geothermalis DSM 11300.</title>
        <authorList>
            <person name="Copeland A."/>
            <person name="Lucas S."/>
            <person name="Lapidus A."/>
            <person name="Barry K."/>
            <person name="Detter J.C."/>
            <person name="Glavina del Rio T."/>
            <person name="Hammon N."/>
            <person name="Israni S."/>
            <person name="Dalin E."/>
            <person name="Tice H."/>
            <person name="Pitluck S."/>
            <person name="Brettin T."/>
            <person name="Bruce D."/>
            <person name="Han C."/>
            <person name="Tapia R."/>
            <person name="Saunders E."/>
            <person name="Gilna P."/>
            <person name="Schmutz J."/>
            <person name="Larimer F."/>
            <person name="Land M."/>
            <person name="Hauser L."/>
            <person name="Kyrpides N."/>
            <person name="Kim E."/>
            <person name="Daly M.J."/>
            <person name="Fredrickson J.K."/>
            <person name="Makarova K.S."/>
            <person name="Gaidamakova E.K."/>
            <person name="Zhai M."/>
            <person name="Richardson P."/>
        </authorList>
    </citation>
    <scope>NUCLEOTIDE SEQUENCE [LARGE SCALE GENOMIC DNA]</scope>
    <source>
        <strain>DSM 11300 / CIP 105573 / AG-3a</strain>
    </source>
</reference>
<evidence type="ECO:0000255" key="1">
    <source>
        <dbReference type="HAMAP-Rule" id="MF_00373"/>
    </source>
</evidence>
<evidence type="ECO:0000305" key="2"/>
<keyword id="KW-0687">Ribonucleoprotein</keyword>
<keyword id="KW-0689">Ribosomal protein</keyword>
<proteinExistence type="inferred from homology"/>